<comment type="catalytic activity">
    <reaction>
        <text>Release of any N-terminal amino acid, including proline, that is linked to proline, even from a dipeptide or tripeptide.</text>
        <dbReference type="EC" id="3.4.11.9"/>
    </reaction>
</comment>
<comment type="cofactor">
    <cofactor evidence="1">
        <name>Mn(2+)</name>
        <dbReference type="ChEBI" id="CHEBI:29035"/>
    </cofactor>
    <text evidence="1">Binds 2 manganese ions per subunit.</text>
</comment>
<comment type="subunit">
    <text>Homodimer.</text>
</comment>
<comment type="miscellaneous">
    <text>S.lividans has two genes (pepP1 and pepP2) which encode aminopeptidase P.</text>
</comment>
<comment type="similarity">
    <text evidence="4">Belongs to the peptidase M24B family.</text>
</comment>
<organism>
    <name type="scientific">Streptomyces lividans</name>
    <dbReference type="NCBI Taxonomy" id="1916"/>
    <lineage>
        <taxon>Bacteria</taxon>
        <taxon>Bacillati</taxon>
        <taxon>Actinomycetota</taxon>
        <taxon>Actinomycetes</taxon>
        <taxon>Kitasatosporales</taxon>
        <taxon>Streptomycetaceae</taxon>
        <taxon>Streptomyces</taxon>
    </lineage>
</organism>
<feature type="initiator methionine" description="Removed" evidence="3">
    <location>
        <position position="1"/>
    </location>
</feature>
<feature type="chain" id="PRO_0000185081" description="Xaa-Pro aminopeptidase 1">
    <location>
        <begin position="2"/>
        <end position="491"/>
    </location>
</feature>
<feature type="region of interest" description="Disordered" evidence="2">
    <location>
        <begin position="1"/>
        <end position="32"/>
    </location>
</feature>
<feature type="binding site" evidence="1">
    <location>
        <position position="308"/>
    </location>
    <ligand>
        <name>Mn(2+)</name>
        <dbReference type="ChEBI" id="CHEBI:29035"/>
        <label>2</label>
    </ligand>
</feature>
<feature type="binding site" evidence="1">
    <location>
        <position position="320"/>
    </location>
    <ligand>
        <name>Mn(2+)</name>
        <dbReference type="ChEBI" id="CHEBI:29035"/>
        <label>1</label>
    </ligand>
</feature>
<feature type="binding site" evidence="1">
    <location>
        <position position="320"/>
    </location>
    <ligand>
        <name>Mn(2+)</name>
        <dbReference type="ChEBI" id="CHEBI:29035"/>
        <label>2</label>
    </ligand>
</feature>
<feature type="binding site" evidence="1">
    <location>
        <position position="403"/>
    </location>
    <ligand>
        <name>Mn(2+)</name>
        <dbReference type="ChEBI" id="CHEBI:29035"/>
        <label>1</label>
    </ligand>
</feature>
<feature type="binding site" evidence="1">
    <location>
        <position position="434"/>
    </location>
    <ligand>
        <name>Mn(2+)</name>
        <dbReference type="ChEBI" id="CHEBI:29035"/>
        <label>1</label>
    </ligand>
</feature>
<feature type="binding site" evidence="1">
    <location>
        <position position="458"/>
    </location>
    <ligand>
        <name>Mn(2+)</name>
        <dbReference type="ChEBI" id="CHEBI:29035"/>
        <label>1</label>
    </ligand>
</feature>
<feature type="binding site" evidence="1">
    <location>
        <position position="458"/>
    </location>
    <ligand>
        <name>Mn(2+)</name>
        <dbReference type="ChEBI" id="CHEBI:29035"/>
        <label>2</label>
    </ligand>
</feature>
<keyword id="KW-0031">Aminopeptidase</keyword>
<keyword id="KW-0903">Direct protein sequencing</keyword>
<keyword id="KW-0378">Hydrolase</keyword>
<keyword id="KW-0464">Manganese</keyword>
<keyword id="KW-0479">Metal-binding</keyword>
<keyword id="KW-0482">Metalloprotease</keyword>
<keyword id="KW-0645">Protease</keyword>
<accession>P0A3Z2</accession>
<accession>Q05813</accession>
<reference key="1">
    <citation type="journal article" date="1993" name="Gene">
        <title>Cloning and characterisation of an aminopeptidase P-encoding gene from Streptomyces lividans.</title>
        <authorList>
            <person name="Butler M.J."/>
            <person name="Bergeron A."/>
            <person name="Soostmeyer G."/>
            <person name="Zimny T."/>
            <person name="Malek L.T."/>
        </authorList>
    </citation>
    <scope>NUCLEOTIDE SEQUENCE [GENOMIC DNA]</scope>
    <scope>PROTEIN SEQUENCE OF 2-16</scope>
    <source>
        <strain>66 / 1326</strain>
    </source>
</reference>
<gene>
    <name type="primary">pepPI</name>
    <name type="synonym">pepP</name>
</gene>
<name>AMPP1_STRLI</name>
<evidence type="ECO:0000250" key="1"/>
<evidence type="ECO:0000256" key="2">
    <source>
        <dbReference type="SAM" id="MobiDB-lite"/>
    </source>
</evidence>
<evidence type="ECO:0000269" key="3">
    <source>
    </source>
</evidence>
<evidence type="ECO:0000305" key="4"/>
<sequence length="491" mass="54048">MAEELTPENPAIPETPEETEEPIKQRKNGLYPGVSDELAENMQSGWADTELHDLEPIAQAAETAARRAALSARFPGERLVIPAGNLKTRSNDTEYSFRASVEYAYLTGNQTEDGVLVMEPEGDGHAATIYLLPRSDRENGEFWLDGQGELWVGRRHSLAEAGELYGIPASDVRELAGSLREATGPVRVVRGFDAGIEAALTDKVTAERDEELRVFLSEARLVKDEFEIGELQKAVDSTVRGFEDVVKVLDRAEATSERYIEGTFFLRARVEGNDVGYGSICAAGPHACTLHWVRNDGPVRSGDLLLLDAGVETHTYYTADVTRTLPISGTYSELQKKIYDAVYDAQEAGIAAVRPGAKYRDFHDASQRVLAERLVEWGLVEGPVERVLELGLQRRWTLHGTGHMLGMDVHDCAAARVESYVDGTLEPGMVLTVEPGLYFQADDLTVPEEYRGIGVRIEDDILVTADGNRNLSAGLPRRSDEVEEWMAALKG</sequence>
<dbReference type="EC" id="3.4.11.9"/>
<dbReference type="EMBL" id="M91546">
    <property type="protein sequence ID" value="AAA26703.1"/>
    <property type="molecule type" value="Genomic_DNA"/>
</dbReference>
<dbReference type="PIR" id="JN0491">
    <property type="entry name" value="JN0491"/>
</dbReference>
<dbReference type="SMR" id="P0A3Z2"/>
<dbReference type="MEROPS" id="M24.033"/>
<dbReference type="GO" id="GO:0005829">
    <property type="term" value="C:cytosol"/>
    <property type="evidence" value="ECO:0007669"/>
    <property type="project" value="TreeGrafter"/>
</dbReference>
<dbReference type="GO" id="GO:0030145">
    <property type="term" value="F:manganese ion binding"/>
    <property type="evidence" value="ECO:0007669"/>
    <property type="project" value="InterPro"/>
</dbReference>
<dbReference type="GO" id="GO:0070006">
    <property type="term" value="F:metalloaminopeptidase activity"/>
    <property type="evidence" value="ECO:0007669"/>
    <property type="project" value="InterPro"/>
</dbReference>
<dbReference type="GO" id="GO:0006508">
    <property type="term" value="P:proteolysis"/>
    <property type="evidence" value="ECO:0007669"/>
    <property type="project" value="UniProtKB-KW"/>
</dbReference>
<dbReference type="CDD" id="cd01087">
    <property type="entry name" value="Prolidase"/>
    <property type="match status" value="1"/>
</dbReference>
<dbReference type="Gene3D" id="3.90.230.10">
    <property type="entry name" value="Creatinase/methionine aminopeptidase superfamily"/>
    <property type="match status" value="1"/>
</dbReference>
<dbReference type="Gene3D" id="3.40.350.10">
    <property type="entry name" value="Creatinase/prolidase N-terminal domain"/>
    <property type="match status" value="1"/>
</dbReference>
<dbReference type="InterPro" id="IPR007865">
    <property type="entry name" value="Aminopep_P_N"/>
</dbReference>
<dbReference type="InterPro" id="IPR029149">
    <property type="entry name" value="Creatin/AminoP/Spt16_N"/>
</dbReference>
<dbReference type="InterPro" id="IPR036005">
    <property type="entry name" value="Creatinase/aminopeptidase-like"/>
</dbReference>
<dbReference type="InterPro" id="IPR000994">
    <property type="entry name" value="Pept_M24"/>
</dbReference>
<dbReference type="InterPro" id="IPR001131">
    <property type="entry name" value="Peptidase_M24B_aminopep-P_CS"/>
</dbReference>
<dbReference type="InterPro" id="IPR052433">
    <property type="entry name" value="X-Pro_dipept-like"/>
</dbReference>
<dbReference type="PANTHER" id="PTHR43226">
    <property type="entry name" value="XAA-PRO AMINOPEPTIDASE 3"/>
    <property type="match status" value="1"/>
</dbReference>
<dbReference type="PANTHER" id="PTHR43226:SF4">
    <property type="entry name" value="XAA-PRO AMINOPEPTIDASE 3"/>
    <property type="match status" value="1"/>
</dbReference>
<dbReference type="Pfam" id="PF05195">
    <property type="entry name" value="AMP_N"/>
    <property type="match status" value="1"/>
</dbReference>
<dbReference type="Pfam" id="PF00557">
    <property type="entry name" value="Peptidase_M24"/>
    <property type="match status" value="1"/>
</dbReference>
<dbReference type="SMART" id="SM01011">
    <property type="entry name" value="AMP_N"/>
    <property type="match status" value="1"/>
</dbReference>
<dbReference type="SUPFAM" id="SSF55920">
    <property type="entry name" value="Creatinase/aminopeptidase"/>
    <property type="match status" value="1"/>
</dbReference>
<dbReference type="SUPFAM" id="SSF53092">
    <property type="entry name" value="Creatinase/prolidase N-terminal domain"/>
    <property type="match status" value="1"/>
</dbReference>
<dbReference type="PROSITE" id="PS00491">
    <property type="entry name" value="PROLINE_PEPTIDASE"/>
    <property type="match status" value="1"/>
</dbReference>
<proteinExistence type="evidence at protein level"/>
<protein>
    <recommendedName>
        <fullName>Xaa-Pro aminopeptidase 1</fullName>
        <ecNumber>3.4.11.9</ecNumber>
    </recommendedName>
    <alternativeName>
        <fullName>Aminoacylproline aminopeptidase I</fullName>
    </alternativeName>
    <alternativeName>
        <fullName>Aminopeptidase P I</fullName>
        <shortName>APP</shortName>
        <shortName>PEPP I</shortName>
    </alternativeName>
    <alternativeName>
        <fullName>X-Pro aminopeptidase I</fullName>
    </alternativeName>
    <alternativeName>
        <fullName>Xaa-Pro aminopeptidase I</fullName>
    </alternativeName>
</protein>